<protein>
    <recommendedName>
        <fullName evidence="1">UPF0299 membrane protein YohJ</fullName>
    </recommendedName>
</protein>
<accession>A9MKS7</accession>
<comment type="subcellular location">
    <subcellularLocation>
        <location evidence="1">Cell inner membrane</location>
        <topology evidence="1">Multi-pass membrane protein</topology>
    </subcellularLocation>
</comment>
<comment type="similarity">
    <text evidence="1">Belongs to the UPF0299 family.</text>
</comment>
<name>YOHJ_SALAR</name>
<reference key="1">
    <citation type="submission" date="2007-11" db="EMBL/GenBank/DDBJ databases">
        <authorList>
            <consortium name="The Salmonella enterica serovar Arizonae Genome Sequencing Project"/>
            <person name="McClelland M."/>
            <person name="Sanderson E.K."/>
            <person name="Porwollik S."/>
            <person name="Spieth J."/>
            <person name="Clifton W.S."/>
            <person name="Fulton R."/>
            <person name="Chunyan W."/>
            <person name="Wollam A."/>
            <person name="Shah N."/>
            <person name="Pepin K."/>
            <person name="Bhonagiri V."/>
            <person name="Nash W."/>
            <person name="Johnson M."/>
            <person name="Thiruvilangam P."/>
            <person name="Wilson R."/>
        </authorList>
    </citation>
    <scope>NUCLEOTIDE SEQUENCE [LARGE SCALE GENOMIC DNA]</scope>
    <source>
        <strain>ATCC BAA-731 / CDC346-86 / RSK2980</strain>
    </source>
</reference>
<feature type="chain" id="PRO_1000085041" description="UPF0299 membrane protein YohJ">
    <location>
        <begin position="1"/>
        <end position="132"/>
    </location>
</feature>
<feature type="transmembrane region" description="Helical" evidence="1">
    <location>
        <begin position="7"/>
        <end position="27"/>
    </location>
</feature>
<feature type="transmembrane region" description="Helical" evidence="1">
    <location>
        <begin position="31"/>
        <end position="51"/>
    </location>
</feature>
<feature type="transmembrane region" description="Helical" evidence="1">
    <location>
        <begin position="63"/>
        <end position="83"/>
    </location>
</feature>
<feature type="transmembrane region" description="Helical" evidence="1">
    <location>
        <begin position="93"/>
        <end position="113"/>
    </location>
</feature>
<evidence type="ECO:0000255" key="1">
    <source>
        <dbReference type="HAMAP-Rule" id="MF_01144"/>
    </source>
</evidence>
<proteinExistence type="inferred from homology"/>
<sequence>MSKSLNIIWQYIRAFVLIYACLYAGIFIASLLPITIPGSIIGMLILFVLLALQILPAKWVNPGCYVLIRYMALLFVPIGVGVMQYFDLLRAQFGPVVVSCAISTLVVFVVVSWSSHLIHGERNVVGQKGSKK</sequence>
<keyword id="KW-0997">Cell inner membrane</keyword>
<keyword id="KW-1003">Cell membrane</keyword>
<keyword id="KW-0472">Membrane</keyword>
<keyword id="KW-1185">Reference proteome</keyword>
<keyword id="KW-0812">Transmembrane</keyword>
<keyword id="KW-1133">Transmembrane helix</keyword>
<dbReference type="EMBL" id="CP000880">
    <property type="protein sequence ID" value="ABX20643.1"/>
    <property type="molecule type" value="Genomic_DNA"/>
</dbReference>
<dbReference type="SMR" id="A9MKS7"/>
<dbReference type="STRING" id="41514.SARI_00720"/>
<dbReference type="KEGG" id="ses:SARI_00720"/>
<dbReference type="HOGENOM" id="CLU_113736_1_1_6"/>
<dbReference type="Proteomes" id="UP000002084">
    <property type="component" value="Chromosome"/>
</dbReference>
<dbReference type="GO" id="GO:0005886">
    <property type="term" value="C:plasma membrane"/>
    <property type="evidence" value="ECO:0007669"/>
    <property type="project" value="UniProtKB-SubCell"/>
</dbReference>
<dbReference type="HAMAP" id="MF_01144">
    <property type="entry name" value="UPF0299"/>
    <property type="match status" value="1"/>
</dbReference>
<dbReference type="InterPro" id="IPR005538">
    <property type="entry name" value="LrgA/CidA"/>
</dbReference>
<dbReference type="InterPro" id="IPR022957">
    <property type="entry name" value="Uncharacterised_UPF0299"/>
</dbReference>
<dbReference type="NCBIfam" id="NF002494">
    <property type="entry name" value="PRK01821.1"/>
    <property type="match status" value="1"/>
</dbReference>
<dbReference type="PANTHER" id="PTHR33931">
    <property type="entry name" value="HOLIN-LIKE PROTEIN CIDA-RELATED"/>
    <property type="match status" value="1"/>
</dbReference>
<dbReference type="PANTHER" id="PTHR33931:SF5">
    <property type="entry name" value="UPF0299 MEMBRANE PROTEIN YOHJ"/>
    <property type="match status" value="1"/>
</dbReference>
<dbReference type="Pfam" id="PF03788">
    <property type="entry name" value="LrgA"/>
    <property type="match status" value="1"/>
</dbReference>
<organism>
    <name type="scientific">Salmonella arizonae (strain ATCC BAA-731 / CDC346-86 / RSK2980)</name>
    <dbReference type="NCBI Taxonomy" id="41514"/>
    <lineage>
        <taxon>Bacteria</taxon>
        <taxon>Pseudomonadati</taxon>
        <taxon>Pseudomonadota</taxon>
        <taxon>Gammaproteobacteria</taxon>
        <taxon>Enterobacterales</taxon>
        <taxon>Enterobacteriaceae</taxon>
        <taxon>Salmonella</taxon>
    </lineage>
</organism>
<gene>
    <name evidence="1" type="primary">yohJ</name>
    <name type="ordered locus">SARI_00720</name>
</gene>